<feature type="chain" id="PRO_0000390058" description="NADH-quinone oxidoreductase subunit K">
    <location>
        <begin position="1"/>
        <end position="100"/>
    </location>
</feature>
<feature type="transmembrane region" description="Helical" evidence="1">
    <location>
        <begin position="4"/>
        <end position="24"/>
    </location>
</feature>
<feature type="transmembrane region" description="Helical" evidence="1">
    <location>
        <begin position="28"/>
        <end position="48"/>
    </location>
</feature>
<feature type="transmembrane region" description="Helical" evidence="1">
    <location>
        <begin position="60"/>
        <end position="80"/>
    </location>
</feature>
<proteinExistence type="inferred from homology"/>
<keyword id="KW-0997">Cell inner membrane</keyword>
<keyword id="KW-1003">Cell membrane</keyword>
<keyword id="KW-0472">Membrane</keyword>
<keyword id="KW-0520">NAD</keyword>
<keyword id="KW-0874">Quinone</keyword>
<keyword id="KW-1278">Translocase</keyword>
<keyword id="KW-0812">Transmembrane</keyword>
<keyword id="KW-1133">Transmembrane helix</keyword>
<keyword id="KW-0813">Transport</keyword>
<keyword id="KW-0830">Ubiquinone</keyword>
<name>NUOK_ECO81</name>
<accession>B7MXV8</accession>
<comment type="function">
    <text evidence="1">NDH-1 shuttles electrons from NADH, via FMN and iron-sulfur (Fe-S) centers, to quinones in the respiratory chain. The immediate electron acceptor for the enzyme in this species is believed to be ubiquinone. Couples the redox reaction to proton translocation (for every two electrons transferred, four hydrogen ions are translocated across the cytoplasmic membrane), and thus conserves the redox energy in a proton gradient.</text>
</comment>
<comment type="catalytic activity">
    <reaction evidence="1">
        <text>a quinone + NADH + 5 H(+)(in) = a quinol + NAD(+) + 4 H(+)(out)</text>
        <dbReference type="Rhea" id="RHEA:57888"/>
        <dbReference type="ChEBI" id="CHEBI:15378"/>
        <dbReference type="ChEBI" id="CHEBI:24646"/>
        <dbReference type="ChEBI" id="CHEBI:57540"/>
        <dbReference type="ChEBI" id="CHEBI:57945"/>
        <dbReference type="ChEBI" id="CHEBI:132124"/>
    </reaction>
</comment>
<comment type="subunit">
    <text evidence="1">NDH-1 is composed of 13 different subunits. Subunits NuoA, H, J, K, L, M, N constitute the membrane sector of the complex.</text>
</comment>
<comment type="subcellular location">
    <subcellularLocation>
        <location evidence="1">Cell inner membrane</location>
        <topology evidence="1">Multi-pass membrane protein</topology>
    </subcellularLocation>
</comment>
<comment type="similarity">
    <text evidence="1">Belongs to the complex I subunit 4L family.</text>
</comment>
<sequence length="100" mass="10845">MIPLQHGLILAAILFVLGLTGLVIRRNLLFMLIGLEIMINASALAFVVAGSYWGQTDGQVMYILAISLAAAEASIGLALLLQLHRRRQNLNIDSVSEMRG</sequence>
<organism>
    <name type="scientific">Escherichia coli O81 (strain ED1a)</name>
    <dbReference type="NCBI Taxonomy" id="585397"/>
    <lineage>
        <taxon>Bacteria</taxon>
        <taxon>Pseudomonadati</taxon>
        <taxon>Pseudomonadota</taxon>
        <taxon>Gammaproteobacteria</taxon>
        <taxon>Enterobacterales</taxon>
        <taxon>Enterobacteriaceae</taxon>
        <taxon>Escherichia</taxon>
    </lineage>
</organism>
<gene>
    <name evidence="1" type="primary">nuoK</name>
    <name type="ordered locus">ECED1_2743</name>
</gene>
<protein>
    <recommendedName>
        <fullName evidence="1">NADH-quinone oxidoreductase subunit K</fullName>
        <ecNumber evidence="1">7.1.1.-</ecNumber>
    </recommendedName>
    <alternativeName>
        <fullName evidence="1">NADH dehydrogenase I subunit K</fullName>
    </alternativeName>
    <alternativeName>
        <fullName evidence="1">NDH-1 subunit K</fullName>
    </alternativeName>
</protein>
<dbReference type="EC" id="7.1.1.-" evidence="1"/>
<dbReference type="EMBL" id="CU928162">
    <property type="protein sequence ID" value="CAR08924.2"/>
    <property type="molecule type" value="Genomic_DNA"/>
</dbReference>
<dbReference type="RefSeq" id="WP_000612644.1">
    <property type="nucleotide sequence ID" value="NC_011745.1"/>
</dbReference>
<dbReference type="SMR" id="B7MXV8"/>
<dbReference type="GeneID" id="93033872"/>
<dbReference type="KEGG" id="ecq:ECED1_2743"/>
<dbReference type="HOGENOM" id="CLU_144724_0_1_6"/>
<dbReference type="Proteomes" id="UP000000748">
    <property type="component" value="Chromosome"/>
</dbReference>
<dbReference type="GO" id="GO:0030964">
    <property type="term" value="C:NADH dehydrogenase complex"/>
    <property type="evidence" value="ECO:0007669"/>
    <property type="project" value="TreeGrafter"/>
</dbReference>
<dbReference type="GO" id="GO:0005886">
    <property type="term" value="C:plasma membrane"/>
    <property type="evidence" value="ECO:0007669"/>
    <property type="project" value="UniProtKB-SubCell"/>
</dbReference>
<dbReference type="GO" id="GO:0050136">
    <property type="term" value="F:NADH:ubiquinone reductase (non-electrogenic) activity"/>
    <property type="evidence" value="ECO:0007669"/>
    <property type="project" value="UniProtKB-UniRule"/>
</dbReference>
<dbReference type="GO" id="GO:0048038">
    <property type="term" value="F:quinone binding"/>
    <property type="evidence" value="ECO:0007669"/>
    <property type="project" value="UniProtKB-KW"/>
</dbReference>
<dbReference type="GO" id="GO:0042773">
    <property type="term" value="P:ATP synthesis coupled electron transport"/>
    <property type="evidence" value="ECO:0007669"/>
    <property type="project" value="InterPro"/>
</dbReference>
<dbReference type="FunFam" id="1.10.287.3510:FF:000001">
    <property type="entry name" value="NADH-quinone oxidoreductase subunit K"/>
    <property type="match status" value="1"/>
</dbReference>
<dbReference type="Gene3D" id="1.10.287.3510">
    <property type="match status" value="1"/>
</dbReference>
<dbReference type="HAMAP" id="MF_01456">
    <property type="entry name" value="NDH1_NuoK"/>
    <property type="match status" value="1"/>
</dbReference>
<dbReference type="InterPro" id="IPR001133">
    <property type="entry name" value="NADH_UbQ_OxRdtase_chain4L/K"/>
</dbReference>
<dbReference type="InterPro" id="IPR039428">
    <property type="entry name" value="NUOK/Mnh_C1-like"/>
</dbReference>
<dbReference type="NCBIfam" id="NF004319">
    <property type="entry name" value="PRK05715.1-1"/>
    <property type="match status" value="1"/>
</dbReference>
<dbReference type="NCBIfam" id="NF004320">
    <property type="entry name" value="PRK05715.1-2"/>
    <property type="match status" value="1"/>
</dbReference>
<dbReference type="PANTHER" id="PTHR11434:SF16">
    <property type="entry name" value="NADH-UBIQUINONE OXIDOREDUCTASE CHAIN 4L"/>
    <property type="match status" value="1"/>
</dbReference>
<dbReference type="PANTHER" id="PTHR11434">
    <property type="entry name" value="NADH-UBIQUINONE OXIDOREDUCTASE SUBUNIT ND4L"/>
    <property type="match status" value="1"/>
</dbReference>
<dbReference type="Pfam" id="PF00420">
    <property type="entry name" value="Oxidored_q2"/>
    <property type="match status" value="1"/>
</dbReference>
<evidence type="ECO:0000255" key="1">
    <source>
        <dbReference type="HAMAP-Rule" id="MF_01456"/>
    </source>
</evidence>
<reference key="1">
    <citation type="journal article" date="2009" name="PLoS Genet.">
        <title>Organised genome dynamics in the Escherichia coli species results in highly diverse adaptive paths.</title>
        <authorList>
            <person name="Touchon M."/>
            <person name="Hoede C."/>
            <person name="Tenaillon O."/>
            <person name="Barbe V."/>
            <person name="Baeriswyl S."/>
            <person name="Bidet P."/>
            <person name="Bingen E."/>
            <person name="Bonacorsi S."/>
            <person name="Bouchier C."/>
            <person name="Bouvet O."/>
            <person name="Calteau A."/>
            <person name="Chiapello H."/>
            <person name="Clermont O."/>
            <person name="Cruveiller S."/>
            <person name="Danchin A."/>
            <person name="Diard M."/>
            <person name="Dossat C."/>
            <person name="Karoui M.E."/>
            <person name="Frapy E."/>
            <person name="Garry L."/>
            <person name="Ghigo J.M."/>
            <person name="Gilles A.M."/>
            <person name="Johnson J."/>
            <person name="Le Bouguenec C."/>
            <person name="Lescat M."/>
            <person name="Mangenot S."/>
            <person name="Martinez-Jehanne V."/>
            <person name="Matic I."/>
            <person name="Nassif X."/>
            <person name="Oztas S."/>
            <person name="Petit M.A."/>
            <person name="Pichon C."/>
            <person name="Rouy Z."/>
            <person name="Ruf C.S."/>
            <person name="Schneider D."/>
            <person name="Tourret J."/>
            <person name="Vacherie B."/>
            <person name="Vallenet D."/>
            <person name="Medigue C."/>
            <person name="Rocha E.P.C."/>
            <person name="Denamur E."/>
        </authorList>
    </citation>
    <scope>NUCLEOTIDE SEQUENCE [LARGE SCALE GENOMIC DNA]</scope>
    <source>
        <strain>ED1a</strain>
    </source>
</reference>